<protein>
    <recommendedName>
        <fullName evidence="1">3-dehydroquinate synthase</fullName>
        <shortName evidence="1">DHQS</shortName>
        <ecNumber evidence="1">4.2.3.4</ecNumber>
    </recommendedName>
</protein>
<evidence type="ECO:0000255" key="1">
    <source>
        <dbReference type="HAMAP-Rule" id="MF_00110"/>
    </source>
</evidence>
<accession>Q8RB14</accession>
<sequence>MDEVIVELKERSYPIYFDYEGFDRVGDLIKKHVRSSKTFVITDSNVYPLYFEKIEESLRKSGFDVLYEVIPAGETSKTMEMAQRLLEVAYDSGLLRDSSIIALGGGVVGDIAGFVAATYMRGIDFIQIPTTLLAQVDSSVGGKVAVNLKKGKNIVGAFYQPKMVYIDTSVLGTLNKREVLGGLAEVIKYGVIWDFDLFTYIEENLGDILRLKKEDLTYIVKRSCEIKAKVVSLDEKEENLRAILNFGHTIGHAIEALTGYERYIHGEAVAIGMAYEARLAFNLGYIDEGYLERILNLIKRAGLPADYEGIEKTDMLNAIKLDKKMREGRINFVLPVGLGKVDIVSVKEEDVLKVLK</sequence>
<reference key="1">
    <citation type="journal article" date="2002" name="Genome Res.">
        <title>A complete sequence of the T. tengcongensis genome.</title>
        <authorList>
            <person name="Bao Q."/>
            <person name="Tian Y."/>
            <person name="Li W."/>
            <person name="Xu Z."/>
            <person name="Xuan Z."/>
            <person name="Hu S."/>
            <person name="Dong W."/>
            <person name="Yang J."/>
            <person name="Chen Y."/>
            <person name="Xue Y."/>
            <person name="Xu Y."/>
            <person name="Lai X."/>
            <person name="Huang L."/>
            <person name="Dong X."/>
            <person name="Ma Y."/>
            <person name="Ling L."/>
            <person name="Tan H."/>
            <person name="Chen R."/>
            <person name="Wang J."/>
            <person name="Yu J."/>
            <person name="Yang H."/>
        </authorList>
    </citation>
    <scope>NUCLEOTIDE SEQUENCE [LARGE SCALE GENOMIC DNA]</scope>
    <source>
        <strain>DSM 15242 / JCM 11007 / NBRC 100824 / MB4</strain>
    </source>
</reference>
<keyword id="KW-0028">Amino-acid biosynthesis</keyword>
<keyword id="KW-0057">Aromatic amino acid biosynthesis</keyword>
<keyword id="KW-0170">Cobalt</keyword>
<keyword id="KW-0963">Cytoplasm</keyword>
<keyword id="KW-0456">Lyase</keyword>
<keyword id="KW-0479">Metal-binding</keyword>
<keyword id="KW-0520">NAD</keyword>
<keyword id="KW-0547">Nucleotide-binding</keyword>
<keyword id="KW-1185">Reference proteome</keyword>
<keyword id="KW-0862">Zinc</keyword>
<gene>
    <name evidence="1" type="primary">aroB</name>
    <name type="ordered locus">TTE1011</name>
</gene>
<proteinExistence type="inferred from homology"/>
<name>AROB_CALS4</name>
<feature type="chain" id="PRO_0000140801" description="3-dehydroquinate synthase">
    <location>
        <begin position="1"/>
        <end position="356"/>
    </location>
</feature>
<feature type="binding site" evidence="1">
    <location>
        <begin position="106"/>
        <end position="110"/>
    </location>
    <ligand>
        <name>NAD(+)</name>
        <dbReference type="ChEBI" id="CHEBI:57540"/>
    </ligand>
</feature>
<feature type="binding site" evidence="1">
    <location>
        <begin position="130"/>
        <end position="131"/>
    </location>
    <ligand>
        <name>NAD(+)</name>
        <dbReference type="ChEBI" id="CHEBI:57540"/>
    </ligand>
</feature>
<feature type="binding site" evidence="1">
    <location>
        <position position="143"/>
    </location>
    <ligand>
        <name>NAD(+)</name>
        <dbReference type="ChEBI" id="CHEBI:57540"/>
    </ligand>
</feature>
<feature type="binding site" evidence="1">
    <location>
        <position position="152"/>
    </location>
    <ligand>
        <name>NAD(+)</name>
        <dbReference type="ChEBI" id="CHEBI:57540"/>
    </ligand>
</feature>
<feature type="binding site" evidence="1">
    <location>
        <position position="185"/>
    </location>
    <ligand>
        <name>Zn(2+)</name>
        <dbReference type="ChEBI" id="CHEBI:29105"/>
    </ligand>
</feature>
<feature type="binding site" evidence="1">
    <location>
        <position position="248"/>
    </location>
    <ligand>
        <name>Zn(2+)</name>
        <dbReference type="ChEBI" id="CHEBI:29105"/>
    </ligand>
</feature>
<feature type="binding site" evidence="1">
    <location>
        <position position="265"/>
    </location>
    <ligand>
        <name>Zn(2+)</name>
        <dbReference type="ChEBI" id="CHEBI:29105"/>
    </ligand>
</feature>
<dbReference type="EC" id="4.2.3.4" evidence="1"/>
<dbReference type="EMBL" id="AE008691">
    <property type="protein sequence ID" value="AAM24266.1"/>
    <property type="molecule type" value="Genomic_DNA"/>
</dbReference>
<dbReference type="RefSeq" id="WP_011025381.1">
    <property type="nucleotide sequence ID" value="NC_003869.1"/>
</dbReference>
<dbReference type="SMR" id="Q8RB14"/>
<dbReference type="STRING" id="273068.TTE1011"/>
<dbReference type="KEGG" id="tte:TTE1011"/>
<dbReference type="eggNOG" id="COG0337">
    <property type="taxonomic scope" value="Bacteria"/>
</dbReference>
<dbReference type="HOGENOM" id="CLU_001201_0_2_9"/>
<dbReference type="OrthoDB" id="9806583at2"/>
<dbReference type="UniPathway" id="UPA00053">
    <property type="reaction ID" value="UER00085"/>
</dbReference>
<dbReference type="Proteomes" id="UP000000555">
    <property type="component" value="Chromosome"/>
</dbReference>
<dbReference type="GO" id="GO:0005737">
    <property type="term" value="C:cytoplasm"/>
    <property type="evidence" value="ECO:0007669"/>
    <property type="project" value="UniProtKB-SubCell"/>
</dbReference>
<dbReference type="GO" id="GO:0003856">
    <property type="term" value="F:3-dehydroquinate synthase activity"/>
    <property type="evidence" value="ECO:0007669"/>
    <property type="project" value="UniProtKB-UniRule"/>
</dbReference>
<dbReference type="GO" id="GO:0046872">
    <property type="term" value="F:metal ion binding"/>
    <property type="evidence" value="ECO:0007669"/>
    <property type="project" value="UniProtKB-KW"/>
</dbReference>
<dbReference type="GO" id="GO:0000166">
    <property type="term" value="F:nucleotide binding"/>
    <property type="evidence" value="ECO:0007669"/>
    <property type="project" value="UniProtKB-KW"/>
</dbReference>
<dbReference type="GO" id="GO:0008652">
    <property type="term" value="P:amino acid biosynthetic process"/>
    <property type="evidence" value="ECO:0007669"/>
    <property type="project" value="UniProtKB-KW"/>
</dbReference>
<dbReference type="GO" id="GO:0009073">
    <property type="term" value="P:aromatic amino acid family biosynthetic process"/>
    <property type="evidence" value="ECO:0007669"/>
    <property type="project" value="UniProtKB-KW"/>
</dbReference>
<dbReference type="GO" id="GO:0009423">
    <property type="term" value="P:chorismate biosynthetic process"/>
    <property type="evidence" value="ECO:0007669"/>
    <property type="project" value="UniProtKB-UniRule"/>
</dbReference>
<dbReference type="CDD" id="cd08195">
    <property type="entry name" value="DHQS"/>
    <property type="match status" value="1"/>
</dbReference>
<dbReference type="FunFam" id="3.40.50.1970:FF:000001">
    <property type="entry name" value="3-dehydroquinate synthase"/>
    <property type="match status" value="1"/>
</dbReference>
<dbReference type="Gene3D" id="3.40.50.1970">
    <property type="match status" value="1"/>
</dbReference>
<dbReference type="Gene3D" id="1.20.1090.10">
    <property type="entry name" value="Dehydroquinate synthase-like - alpha domain"/>
    <property type="match status" value="1"/>
</dbReference>
<dbReference type="HAMAP" id="MF_00110">
    <property type="entry name" value="DHQ_synthase"/>
    <property type="match status" value="1"/>
</dbReference>
<dbReference type="InterPro" id="IPR050071">
    <property type="entry name" value="Dehydroquinate_synthase"/>
</dbReference>
<dbReference type="InterPro" id="IPR016037">
    <property type="entry name" value="DHQ_synth_AroB"/>
</dbReference>
<dbReference type="InterPro" id="IPR030963">
    <property type="entry name" value="DHQ_synth_fam"/>
</dbReference>
<dbReference type="InterPro" id="IPR030960">
    <property type="entry name" value="DHQS/DOIS_N"/>
</dbReference>
<dbReference type="InterPro" id="IPR056179">
    <property type="entry name" value="DHQS_C"/>
</dbReference>
<dbReference type="NCBIfam" id="TIGR01357">
    <property type="entry name" value="aroB"/>
    <property type="match status" value="1"/>
</dbReference>
<dbReference type="PANTHER" id="PTHR43622">
    <property type="entry name" value="3-DEHYDROQUINATE SYNTHASE"/>
    <property type="match status" value="1"/>
</dbReference>
<dbReference type="PANTHER" id="PTHR43622:SF1">
    <property type="entry name" value="3-DEHYDROQUINATE SYNTHASE"/>
    <property type="match status" value="1"/>
</dbReference>
<dbReference type="Pfam" id="PF01761">
    <property type="entry name" value="DHQ_synthase"/>
    <property type="match status" value="1"/>
</dbReference>
<dbReference type="Pfam" id="PF24621">
    <property type="entry name" value="DHQS_C"/>
    <property type="match status" value="1"/>
</dbReference>
<dbReference type="PIRSF" id="PIRSF001455">
    <property type="entry name" value="DHQ_synth"/>
    <property type="match status" value="1"/>
</dbReference>
<dbReference type="SUPFAM" id="SSF56796">
    <property type="entry name" value="Dehydroquinate synthase-like"/>
    <property type="match status" value="1"/>
</dbReference>
<organism>
    <name type="scientific">Caldanaerobacter subterraneus subsp. tengcongensis (strain DSM 15242 / JCM 11007 / NBRC 100824 / MB4)</name>
    <name type="common">Thermoanaerobacter tengcongensis</name>
    <dbReference type="NCBI Taxonomy" id="273068"/>
    <lineage>
        <taxon>Bacteria</taxon>
        <taxon>Bacillati</taxon>
        <taxon>Bacillota</taxon>
        <taxon>Clostridia</taxon>
        <taxon>Thermoanaerobacterales</taxon>
        <taxon>Thermoanaerobacteraceae</taxon>
        <taxon>Caldanaerobacter</taxon>
    </lineage>
</organism>
<comment type="function">
    <text evidence="1">Catalyzes the conversion of 3-deoxy-D-arabino-heptulosonate 7-phosphate (DAHP) to dehydroquinate (DHQ).</text>
</comment>
<comment type="catalytic activity">
    <reaction evidence="1">
        <text>7-phospho-2-dehydro-3-deoxy-D-arabino-heptonate = 3-dehydroquinate + phosphate</text>
        <dbReference type="Rhea" id="RHEA:21968"/>
        <dbReference type="ChEBI" id="CHEBI:32364"/>
        <dbReference type="ChEBI" id="CHEBI:43474"/>
        <dbReference type="ChEBI" id="CHEBI:58394"/>
        <dbReference type="EC" id="4.2.3.4"/>
    </reaction>
</comment>
<comment type="cofactor">
    <cofactor evidence="1">
        <name>NAD(+)</name>
        <dbReference type="ChEBI" id="CHEBI:57540"/>
    </cofactor>
</comment>
<comment type="cofactor">
    <cofactor evidence="1">
        <name>Co(2+)</name>
        <dbReference type="ChEBI" id="CHEBI:48828"/>
    </cofactor>
    <cofactor evidence="1">
        <name>Zn(2+)</name>
        <dbReference type="ChEBI" id="CHEBI:29105"/>
    </cofactor>
    <text evidence="1">Binds 1 divalent metal cation per subunit. Can use either Co(2+) or Zn(2+).</text>
</comment>
<comment type="pathway">
    <text evidence="1">Metabolic intermediate biosynthesis; chorismate biosynthesis; chorismate from D-erythrose 4-phosphate and phosphoenolpyruvate: step 2/7.</text>
</comment>
<comment type="subcellular location">
    <subcellularLocation>
        <location evidence="1">Cytoplasm</location>
    </subcellularLocation>
</comment>
<comment type="similarity">
    <text evidence="1">Belongs to the sugar phosphate cyclases superfamily. Dehydroquinate synthase family.</text>
</comment>